<reference key="1">
    <citation type="journal article" date="1994" name="J. Gen. Virol.">
        <title>Cloning, characterization and expression of the gene that encodes the major neutralization-specific antigen of African horsesickness virus serotype 3.</title>
        <authorList>
            <person name="Vreede F.T."/>
            <person name="Huismans H."/>
        </authorList>
    </citation>
    <scope>NUCLEOTIDE SEQUENCE [GENOMIC RNA]</scope>
</reference>
<name>VP2_AHSV3</name>
<sequence>MASEFGILLTNQIYDQTYEKEMCDVIITAENAVRRVEVAGVHGYEWGATNHRLGLCEVENTKSIGRMIYEQIRCEGAYPIFPHYITDTLKYGKSIDRNDNQIRVDRDDERVRKIKIQPYFGEMYFSPENYITVFCKRQAISGQIEVSRSIIGRRMKYEESAEQTKGTINANKYRLLEKWRDLAYEQIEIERDNERCLTHNTDPIYQLIKKMRYGMMYPVHYMLNDRYKVVQERADMGVEKWLLQKIGRGTQRRKADDGDNDALLQLERMMSSEELERSVIESVIRFGSLYNAHAGKKTGDIPLEVLIKYCDSLTTFVHKKNREGGDNQTARDEIRRAVVKNIPSMKQENQMKVTPNIRNFLFFAYLNGFKRNNGVDIDPNNGTWSKHKAEVKKFLNEEQKKNENKPLKVLIDGAYISTDAEYGTVAHWVDWVVDIVMMTQVSRMIKEYNFIRLKKDQLISGMNKLEDGVKCYAYCLILALYDFHGRDVDGFAQGTRTAAIVETVARMFPDFRSEVSEKFGIDLAVSEESDELFVKKTMVSSFSDSGEMGYKFIFGWRKTDFKVETDYGEIVSDEVHRLYQAILDGKEWSKEVDDPEKYFVDDLYNRCPESIYVRNGVDPNNKIMIKKRGLVGESQRIFLRDLSHIGMNFKKLLLRLSSKRLHARGEHIQYHEIDVEDFKPCAIAELGLHCSTYIYQDLLVGANRGEYVKDAKELVWFDIANTNFNITRPFDRCWPSSCAEAELSLRFHLITKIFTRYRGERTSFVDIINELSEHGYVKHNFPSYKHYYLSVIQTVFEDQRAIDPLDFCAMISRNETRESTLKGFSMFTAIVKSERLIDTLFLNFLLWIVFEMENVDVSAANKRHPLLISHEKGLRLIGVDLFNGALSISTGGWIPYLERICSEEKAQRRLNADELKIKSWFLTYYMNLSLERRAEPRMSFKFEGLTTWIGSNCGGVRDYVVQALPMRKPKPGLLMIIYGDDGDARWVEWAMKNFTAVDGSLGFIYIDRHKLVNKSDFRVREMKIYNRGRLDRLILISSGHYTFGNKFLMSKLLAKTE</sequence>
<organismHost>
    <name type="scientific">Anas</name>
    <name type="common">ducks</name>
    <dbReference type="NCBI Taxonomy" id="8835"/>
</organismHost>
<organismHost>
    <name type="scientific">Camelus dromedarius</name>
    <name type="common">Dromedary</name>
    <name type="synonym">Arabian camel</name>
    <dbReference type="NCBI Taxonomy" id="9838"/>
</organismHost>
<organismHost>
    <name type="scientific">Canis lupus familiaris</name>
    <name type="common">Dog</name>
    <name type="synonym">Canis familiaris</name>
    <dbReference type="NCBI Taxonomy" id="9615"/>
</organismHost>
<organismHost>
    <name type="scientific">Equus asinus</name>
    <name type="common">Donkey</name>
    <name type="synonym">Equus africanus asinus</name>
    <dbReference type="NCBI Taxonomy" id="9793"/>
</organismHost>
<organismHost>
    <name type="scientific">Equus caballus</name>
    <name type="common">Horse</name>
    <dbReference type="NCBI Taxonomy" id="9796"/>
</organismHost>
<organismHost>
    <name type="scientific">Equus hemionus</name>
    <name type="common">Onager</name>
    <name type="synonym">Asian wild ass</name>
    <dbReference type="NCBI Taxonomy" id="9794"/>
</organismHost>
<organismHost>
    <name type="scientific">Equus quagga burchellii</name>
    <name type="common">Burchell's zebra</name>
    <name type="synonym">Equus burchelli</name>
    <dbReference type="NCBI Taxonomy" id="89252"/>
</organismHost>
<organismHost>
    <name type="scientific">Loxodonta africana</name>
    <name type="common">African elephant</name>
    <dbReference type="NCBI Taxonomy" id="9785"/>
</organismHost>
<organism>
    <name type="scientific">African horse sickness virus 3</name>
    <name type="common">AHSV-3</name>
    <dbReference type="NCBI Taxonomy" id="117204"/>
    <lineage>
        <taxon>Viruses</taxon>
        <taxon>Riboviria</taxon>
        <taxon>Orthornavirae</taxon>
        <taxon>Duplornaviricota</taxon>
        <taxon>Resentoviricetes</taxon>
        <taxon>Reovirales</taxon>
        <taxon>Sedoreoviridae</taxon>
        <taxon>Orbivirus</taxon>
        <taxon>African horse sickness virus</taxon>
    </lineage>
</organism>
<gene>
    <name type="primary">Segment-2</name>
    <name type="synonym">L2</name>
</gene>
<proteinExistence type="inferred from homology"/>
<dbReference type="EMBL" id="U01832">
    <property type="protein sequence ID" value="AAA62184.1"/>
    <property type="molecule type" value="Genomic_RNA"/>
</dbReference>
<dbReference type="EMBL" id="Z26316">
    <property type="protein sequence ID" value="CAA81225.1"/>
    <property type="molecule type" value="Genomic_DNA"/>
</dbReference>
<dbReference type="PIR" id="S47151">
    <property type="entry name" value="S47151"/>
</dbReference>
<dbReference type="GO" id="GO:0039625">
    <property type="term" value="C:viral inner capsid"/>
    <property type="evidence" value="ECO:0007669"/>
    <property type="project" value="UniProtKB-KW"/>
</dbReference>
<dbReference type="GO" id="GO:0005198">
    <property type="term" value="F:structural molecule activity"/>
    <property type="evidence" value="ECO:0007669"/>
    <property type="project" value="InterPro"/>
</dbReference>
<dbReference type="InterPro" id="IPR001742">
    <property type="entry name" value="Capsid_VP2_Orbivir"/>
</dbReference>
<dbReference type="Pfam" id="PF00898">
    <property type="entry name" value="Orbi_VP2"/>
    <property type="match status" value="1"/>
</dbReference>
<protein>
    <recommendedName>
        <fullName>Outer capsid protein VP2</fullName>
    </recommendedName>
</protein>
<evidence type="ECO:0000305" key="1"/>
<keyword id="KW-0167">Capsid protein</keyword>
<keyword id="KW-1153">Inner capsid protein</keyword>
<keyword id="KW-0946">Virion</keyword>
<comment type="function">
    <text>The VP2 protein is one of the two proteins (with VP5) which constitute the virus particle outer capsid. It is the major target of the host immunogenic response.</text>
</comment>
<comment type="subcellular location">
    <subcellularLocation>
        <location evidence="1">Virion</location>
    </subcellularLocation>
</comment>
<comment type="similarity">
    <text evidence="1">Belongs to the orbivirus VP2 family.</text>
</comment>
<feature type="chain" id="PRO_0000222688" description="Outer capsid protein VP2">
    <location>
        <begin position="1"/>
        <end position="1057"/>
    </location>
</feature>
<accession>Q89508</accession>